<proteinExistence type="inferred from homology"/>
<protein>
    <recommendedName>
        <fullName evidence="1">Protein-L-isoaspartate O-methyltransferase</fullName>
        <ecNumber evidence="1">2.1.1.77</ecNumber>
    </recommendedName>
    <alternativeName>
        <fullName evidence="1">L-isoaspartyl protein carboxyl methyltransferase</fullName>
    </alternativeName>
    <alternativeName>
        <fullName evidence="1">Protein L-isoaspartyl methyltransferase</fullName>
    </alternativeName>
    <alternativeName>
        <fullName evidence="1">Protein-beta-aspartate methyltransferase</fullName>
        <shortName evidence="1">PIMT</shortName>
    </alternativeName>
</protein>
<accession>A7MJ61</accession>
<organism>
    <name type="scientific">Cronobacter sakazakii (strain ATCC BAA-894)</name>
    <name type="common">Enterobacter sakazakii</name>
    <dbReference type="NCBI Taxonomy" id="290339"/>
    <lineage>
        <taxon>Bacteria</taxon>
        <taxon>Pseudomonadati</taxon>
        <taxon>Pseudomonadota</taxon>
        <taxon>Gammaproteobacteria</taxon>
        <taxon>Enterobacterales</taxon>
        <taxon>Enterobacteriaceae</taxon>
        <taxon>Cronobacter</taxon>
    </lineage>
</organism>
<dbReference type="EC" id="2.1.1.77" evidence="1"/>
<dbReference type="EMBL" id="CP000783">
    <property type="protein sequence ID" value="ABU75839.1"/>
    <property type="molecule type" value="Genomic_DNA"/>
</dbReference>
<dbReference type="RefSeq" id="WP_012123933.1">
    <property type="nucleotide sequence ID" value="NC_009778.1"/>
</dbReference>
<dbReference type="SMR" id="A7MJ61"/>
<dbReference type="KEGG" id="esa:ESA_00548"/>
<dbReference type="HOGENOM" id="CLU_055432_2_0_6"/>
<dbReference type="Proteomes" id="UP000000260">
    <property type="component" value="Chromosome"/>
</dbReference>
<dbReference type="GO" id="GO:0005737">
    <property type="term" value="C:cytoplasm"/>
    <property type="evidence" value="ECO:0007669"/>
    <property type="project" value="UniProtKB-SubCell"/>
</dbReference>
<dbReference type="GO" id="GO:0004719">
    <property type="term" value="F:protein-L-isoaspartate (D-aspartate) O-methyltransferase activity"/>
    <property type="evidence" value="ECO:0007669"/>
    <property type="project" value="UniProtKB-UniRule"/>
</dbReference>
<dbReference type="GO" id="GO:0032259">
    <property type="term" value="P:methylation"/>
    <property type="evidence" value="ECO:0007669"/>
    <property type="project" value="UniProtKB-KW"/>
</dbReference>
<dbReference type="GO" id="GO:0036211">
    <property type="term" value="P:protein modification process"/>
    <property type="evidence" value="ECO:0007669"/>
    <property type="project" value="UniProtKB-UniRule"/>
</dbReference>
<dbReference type="GO" id="GO:0030091">
    <property type="term" value="P:protein repair"/>
    <property type="evidence" value="ECO:0007669"/>
    <property type="project" value="UniProtKB-UniRule"/>
</dbReference>
<dbReference type="CDD" id="cd02440">
    <property type="entry name" value="AdoMet_MTases"/>
    <property type="match status" value="1"/>
</dbReference>
<dbReference type="FunFam" id="3.40.50.150:FF:000010">
    <property type="entry name" value="Protein-L-isoaspartate O-methyltransferase"/>
    <property type="match status" value="1"/>
</dbReference>
<dbReference type="Gene3D" id="3.40.50.150">
    <property type="entry name" value="Vaccinia Virus protein VP39"/>
    <property type="match status" value="1"/>
</dbReference>
<dbReference type="HAMAP" id="MF_00090">
    <property type="entry name" value="PIMT"/>
    <property type="match status" value="1"/>
</dbReference>
<dbReference type="InterPro" id="IPR000682">
    <property type="entry name" value="PCMT"/>
</dbReference>
<dbReference type="InterPro" id="IPR029063">
    <property type="entry name" value="SAM-dependent_MTases_sf"/>
</dbReference>
<dbReference type="NCBIfam" id="TIGR00080">
    <property type="entry name" value="pimt"/>
    <property type="match status" value="1"/>
</dbReference>
<dbReference type="NCBIfam" id="NF001453">
    <property type="entry name" value="PRK00312.1"/>
    <property type="match status" value="1"/>
</dbReference>
<dbReference type="PANTHER" id="PTHR11579">
    <property type="entry name" value="PROTEIN-L-ISOASPARTATE O-METHYLTRANSFERASE"/>
    <property type="match status" value="1"/>
</dbReference>
<dbReference type="PANTHER" id="PTHR11579:SF0">
    <property type="entry name" value="PROTEIN-L-ISOASPARTATE(D-ASPARTATE) O-METHYLTRANSFERASE"/>
    <property type="match status" value="1"/>
</dbReference>
<dbReference type="Pfam" id="PF01135">
    <property type="entry name" value="PCMT"/>
    <property type="match status" value="1"/>
</dbReference>
<dbReference type="SUPFAM" id="SSF53335">
    <property type="entry name" value="S-adenosyl-L-methionine-dependent methyltransferases"/>
    <property type="match status" value="1"/>
</dbReference>
<dbReference type="PROSITE" id="PS01279">
    <property type="entry name" value="PCMT"/>
    <property type="match status" value="1"/>
</dbReference>
<gene>
    <name evidence="1" type="primary">pcm</name>
    <name type="ordered locus">ESA_00548</name>
</gene>
<feature type="chain" id="PRO_1000004818" description="Protein-L-isoaspartate O-methyltransferase">
    <location>
        <begin position="1"/>
        <end position="208"/>
    </location>
</feature>
<feature type="active site" evidence="1">
    <location>
        <position position="59"/>
    </location>
</feature>
<comment type="function">
    <text evidence="1">Catalyzes the methyl esterification of L-isoaspartyl residues in peptides and proteins that result from spontaneous decomposition of normal L-aspartyl and L-asparaginyl residues. It plays a role in the repair and/or degradation of damaged proteins.</text>
</comment>
<comment type="catalytic activity">
    <reaction evidence="1">
        <text>[protein]-L-isoaspartate + S-adenosyl-L-methionine = [protein]-L-isoaspartate alpha-methyl ester + S-adenosyl-L-homocysteine</text>
        <dbReference type="Rhea" id="RHEA:12705"/>
        <dbReference type="Rhea" id="RHEA-COMP:12143"/>
        <dbReference type="Rhea" id="RHEA-COMP:12144"/>
        <dbReference type="ChEBI" id="CHEBI:57856"/>
        <dbReference type="ChEBI" id="CHEBI:59789"/>
        <dbReference type="ChEBI" id="CHEBI:90596"/>
        <dbReference type="ChEBI" id="CHEBI:90598"/>
        <dbReference type="EC" id="2.1.1.77"/>
    </reaction>
</comment>
<comment type="subcellular location">
    <subcellularLocation>
        <location evidence="1">Cytoplasm</location>
    </subcellularLocation>
</comment>
<comment type="similarity">
    <text evidence="1">Belongs to the methyltransferase superfamily. L-isoaspartyl/D-aspartyl protein methyltransferase family.</text>
</comment>
<sequence>MVNNRVQTLLNQLRAQGIKDERVLEAISRVPREKFVDEAFEHKAWENVALPIGSGQTISQPYMVARMTELLTLTPASRVLEIGTGSGYQTAILAHLVHHVCSVERIKSLQWHARRRLKQLDLHNISTRHGDGWQGWQARAPFDAIIVTAAPPEIPTALLSQLDEGGILVLPVGDEQQVLKRVRRRGSEFIIDTVEAVRFVPLVKGELA</sequence>
<evidence type="ECO:0000255" key="1">
    <source>
        <dbReference type="HAMAP-Rule" id="MF_00090"/>
    </source>
</evidence>
<name>PIMT_CROS8</name>
<reference key="1">
    <citation type="journal article" date="2010" name="PLoS ONE">
        <title>Genome sequence of Cronobacter sakazakii BAA-894 and comparative genomic hybridization analysis with other Cronobacter species.</title>
        <authorList>
            <person name="Kucerova E."/>
            <person name="Clifton S.W."/>
            <person name="Xia X.Q."/>
            <person name="Long F."/>
            <person name="Porwollik S."/>
            <person name="Fulton L."/>
            <person name="Fronick C."/>
            <person name="Minx P."/>
            <person name="Kyung K."/>
            <person name="Warren W."/>
            <person name="Fulton R."/>
            <person name="Feng D."/>
            <person name="Wollam A."/>
            <person name="Shah N."/>
            <person name="Bhonagiri V."/>
            <person name="Nash W.E."/>
            <person name="Hallsworth-Pepin K."/>
            <person name="Wilson R.K."/>
            <person name="McClelland M."/>
            <person name="Forsythe S.J."/>
        </authorList>
    </citation>
    <scope>NUCLEOTIDE SEQUENCE [LARGE SCALE GENOMIC DNA]</scope>
    <source>
        <strain>ATCC BAA-894</strain>
    </source>
</reference>
<keyword id="KW-0963">Cytoplasm</keyword>
<keyword id="KW-0489">Methyltransferase</keyword>
<keyword id="KW-1185">Reference proteome</keyword>
<keyword id="KW-0949">S-adenosyl-L-methionine</keyword>
<keyword id="KW-0808">Transferase</keyword>